<feature type="chain" id="PRO_0000133420" description="Protein E7">
    <location>
        <begin position="1"/>
        <end position="100"/>
    </location>
</feature>
<feature type="zinc finger region" evidence="1">
    <location>
        <begin position="55"/>
        <end position="91"/>
    </location>
</feature>
<feature type="region of interest" description="E7 terminal domain" evidence="1">
    <location>
        <begin position="1"/>
        <end position="43"/>
    </location>
</feature>
<feature type="short sequence motif" description="LXCXE motif; interaction with host RB1 and TMEM173/STING" evidence="1">
    <location>
        <begin position="22"/>
        <end position="26"/>
    </location>
</feature>
<feature type="short sequence motif" description="Nuclear export signal" evidence="1">
    <location>
        <begin position="73"/>
        <end position="81"/>
    </location>
</feature>
<organism>
    <name type="scientific">Human papillomavirus 22</name>
    <dbReference type="NCBI Taxonomy" id="37954"/>
    <lineage>
        <taxon>Viruses</taxon>
        <taxon>Monodnaviria</taxon>
        <taxon>Shotokuvirae</taxon>
        <taxon>Cossaviricota</taxon>
        <taxon>Papovaviricetes</taxon>
        <taxon>Zurhausenvirales</taxon>
        <taxon>Papillomaviridae</taxon>
        <taxon>Firstpapillomavirinae</taxon>
        <taxon>Betapapillomavirus</taxon>
        <taxon>Betapapillomavirus 2</taxon>
    </lineage>
</organism>
<name>VE7_HPV22</name>
<gene>
    <name evidence="1" type="primary">E7</name>
</gene>
<accession>P50780</accession>
<proteinExistence type="inferred from homology"/>
<reference key="1">
    <citation type="submission" date="1995-10" db="EMBL/GenBank/DDBJ databases">
        <authorList>
            <person name="Delius H."/>
        </authorList>
    </citation>
    <scope>NUCLEOTIDE SEQUENCE [GENOMIC DNA]</scope>
</reference>
<reference key="2">
    <citation type="journal article" date="2002" name="Rev. Med. Virol.">
        <title>Interactions of SV40 large T antigen and other viral proteins with retinoblastoma tumour suppressor.</title>
        <authorList>
            <person name="Lee C."/>
            <person name="Cho Y."/>
        </authorList>
    </citation>
    <scope>REVIEW</scope>
</reference>
<evidence type="ECO:0000255" key="1">
    <source>
        <dbReference type="HAMAP-Rule" id="MF_04004"/>
    </source>
</evidence>
<protein>
    <recommendedName>
        <fullName evidence="1">Protein E7</fullName>
    </recommendedName>
</protein>
<keyword id="KW-0010">Activator</keyword>
<keyword id="KW-0238">DNA-binding</keyword>
<keyword id="KW-0244">Early protein</keyword>
<keyword id="KW-1078">G1/S host cell cycle checkpoint dysregulation by virus</keyword>
<keyword id="KW-1035">Host cytoplasm</keyword>
<keyword id="KW-1048">Host nucleus</keyword>
<keyword id="KW-0945">Host-virus interaction</keyword>
<keyword id="KW-1090">Inhibition of host innate immune response by virus</keyword>
<keyword id="KW-1114">Inhibition of host interferon signaling pathway by virus</keyword>
<keyword id="KW-0922">Interferon antiviral system evasion</keyword>
<keyword id="KW-0479">Metal-binding</keyword>
<keyword id="KW-1121">Modulation of host cell cycle by virus</keyword>
<keyword id="KW-0553">Oncogene</keyword>
<keyword id="KW-1185">Reference proteome</keyword>
<keyword id="KW-0804">Transcription</keyword>
<keyword id="KW-0805">Transcription regulation</keyword>
<keyword id="KW-0899">Viral immunoevasion</keyword>
<keyword id="KW-0862">Zinc</keyword>
<keyword id="KW-0863">Zinc-finger</keyword>
<dbReference type="EMBL" id="U31780">
    <property type="protein sequence ID" value="AAA79402.1"/>
    <property type="molecule type" value="Genomic_DNA"/>
</dbReference>
<dbReference type="SMR" id="P50780"/>
<dbReference type="Proteomes" id="UP000009111">
    <property type="component" value="Genome"/>
</dbReference>
<dbReference type="GO" id="GO:0030430">
    <property type="term" value="C:host cell cytoplasm"/>
    <property type="evidence" value="ECO:0007669"/>
    <property type="project" value="UniProtKB-SubCell"/>
</dbReference>
<dbReference type="GO" id="GO:0042025">
    <property type="term" value="C:host cell nucleus"/>
    <property type="evidence" value="ECO:0007669"/>
    <property type="project" value="UniProtKB-SubCell"/>
</dbReference>
<dbReference type="GO" id="GO:0003677">
    <property type="term" value="F:DNA binding"/>
    <property type="evidence" value="ECO:0007669"/>
    <property type="project" value="UniProtKB-UniRule"/>
</dbReference>
<dbReference type="GO" id="GO:0003700">
    <property type="term" value="F:DNA-binding transcription factor activity"/>
    <property type="evidence" value="ECO:0007669"/>
    <property type="project" value="UniProtKB-UniRule"/>
</dbReference>
<dbReference type="GO" id="GO:0019904">
    <property type="term" value="F:protein domain specific binding"/>
    <property type="evidence" value="ECO:0007669"/>
    <property type="project" value="UniProtKB-UniRule"/>
</dbReference>
<dbReference type="GO" id="GO:0008270">
    <property type="term" value="F:zinc ion binding"/>
    <property type="evidence" value="ECO:0007669"/>
    <property type="project" value="UniProtKB-KW"/>
</dbReference>
<dbReference type="GO" id="GO:0006351">
    <property type="term" value="P:DNA-templated transcription"/>
    <property type="evidence" value="ECO:0007669"/>
    <property type="project" value="UniProtKB-UniRule"/>
</dbReference>
<dbReference type="GO" id="GO:0039645">
    <property type="term" value="P:symbiont-mediated perturbation of host cell cycle G1/S transition checkpoint"/>
    <property type="evidence" value="ECO:0007669"/>
    <property type="project" value="UniProtKB-UniRule"/>
</dbReference>
<dbReference type="GO" id="GO:0052170">
    <property type="term" value="P:symbiont-mediated suppression of host innate immune response"/>
    <property type="evidence" value="ECO:0007669"/>
    <property type="project" value="UniProtKB-KW"/>
</dbReference>
<dbReference type="GO" id="GO:0039502">
    <property type="term" value="P:symbiont-mediated suppression of host type I interferon-mediated signaling pathway"/>
    <property type="evidence" value="ECO:0007669"/>
    <property type="project" value="UniProtKB-UniRule"/>
</dbReference>
<dbReference type="Gene3D" id="3.30.160.330">
    <property type="match status" value="1"/>
</dbReference>
<dbReference type="HAMAP" id="MF_04004">
    <property type="entry name" value="PPV_E7"/>
    <property type="match status" value="1"/>
</dbReference>
<dbReference type="InterPro" id="IPR000148">
    <property type="entry name" value="Papilloma_E7"/>
</dbReference>
<dbReference type="Pfam" id="PF00527">
    <property type="entry name" value="E7"/>
    <property type="match status" value="1"/>
</dbReference>
<dbReference type="PIRSF" id="PIRSF003407">
    <property type="entry name" value="Papvi_E7"/>
    <property type="match status" value="1"/>
</dbReference>
<dbReference type="SUPFAM" id="SSF161234">
    <property type="entry name" value="E7 C-terminal domain-like"/>
    <property type="match status" value="1"/>
</dbReference>
<comment type="function">
    <text evidence="1">Plays a role in viral genome replication by driving entry of quiescent cells into the cell cycle. Stimulation of progression from G1 to S phase allows the virus to efficiently use the cellular DNA replicating machinery to achieve viral genome replication. E7 protein has both transforming and trans-activating activities. Induces the disassembly of the E2F1 transcription factor from RB1, with subsequent transcriptional activation of E2F1-regulated S-phase genes. Interferes with host histone deacetylation mediated by HDAC1 and HDAC2, leading to transcription activation. Also plays a role in the inhibition of both antiviral and antiproliferative functions of host interferon alpha. Interaction with host TMEM173/STING impairs the ability of TMEM173/STING to sense cytosolic DNA and promote the production of type I interferon (IFN-alpha and IFN-beta).</text>
</comment>
<comment type="subunit">
    <text evidence="1">Homodimer. Homooligomer. Interacts with host RB1; this interaction induces dissociation of RB1-E2F1 complex thereby disrupting RB1 activity. Interacts with host EP300; this interaction represses EP300 transcriptional activity. Interacts with protein E2; this interaction inhibits E7 oncogenic activity. Interacts with host TMEM173/STING; this interaction impairs the ability of TMEM173/STING to sense cytosolic DNA and promote the production of type I interferon (IFN-alpha and IFN-beta).</text>
</comment>
<comment type="subcellular location">
    <subcellularLocation>
        <location evidence="1">Host cytoplasm</location>
    </subcellularLocation>
    <subcellularLocation>
        <location evidence="1">Host nucleus</location>
    </subcellularLocation>
    <text evidence="1">Predominantly found in the host nucleus.</text>
</comment>
<comment type="domain">
    <text evidence="1">The E7 terminal domain is an intrinsically disordered domain, whose flexibility and conformational transitions confer target adaptability to the oncoprotein. It allows adaptation to a variety of protein targets and exposes the PEST degradation sequence that regulates its turnover in the cell.</text>
</comment>
<comment type="PTM">
    <text evidence="1">Highly phosphorylated.</text>
</comment>
<comment type="similarity">
    <text evidence="1">Belongs to the papillomaviridae E7 protein family.</text>
</comment>
<sequence length="100" mass="11360">MIGKQATLCDIVLEELVLPIDLHCHEELPELPEELEESVVEEEPEYTPYKIVVYCGGCDTKLKLYILATLSGIRDFQTSLLGPVKLLCPTCREEIRNGRR</sequence>
<organismHost>
    <name type="scientific">Homo sapiens</name>
    <name type="common">Human</name>
    <dbReference type="NCBI Taxonomy" id="9606"/>
</organismHost>